<sequence length="471" mass="51047">MKRTLFDKIWDAHVVDRLEDGTCILYIDRHLVHEVTSPQAFEGLRMAGRLVRRPDATIAVVDHNVPTSDRRAGIQEPESRLQVETLQKNVAEFGVPYFDLLDVRQGIVHVVGPEQGISLPGFTIVCGDSHTSTHGALGALAFGIGTSEVEHVLATQTLLQKPAKNMLVEVRGKMPPGTTAKDMILAIIGKIGTAGGNGHVIEYAGEAVRALDMAGRMTICNMSIEAGARAGLVAPDDVTFEWLRGRPFAPQGEDFDRAVEYWRSLASDEGAHYDRVVVLEASEIVPMVTWGTSPEDVVRIDGTVPDPDRATDEARRTQMRRMLDYMDLKPGASIADLPVDVVFIGSCTNSRIEDLRSAAAIARGRHVADGVRALVVPGSGIVRQQAEQEGLDRIFLEAGFEWREPGCSMCLGMNPDKLTPGQRCASTSNRNFEGRQGPGGRTHLLSPAMAAAAAVTGKLTDVRTLNVEETV</sequence>
<protein>
    <recommendedName>
        <fullName evidence="1">3-isopropylmalate dehydratase large subunit</fullName>
        <ecNumber evidence="1">4.2.1.33</ecNumber>
    </recommendedName>
    <alternativeName>
        <fullName evidence="1">Alpha-IPM isomerase</fullName>
        <shortName evidence="1">IPMI</shortName>
    </alternativeName>
    <alternativeName>
        <fullName evidence="1">Isopropylmalate isomerase</fullName>
    </alternativeName>
</protein>
<feature type="chain" id="PRO_0000319815" description="3-isopropylmalate dehydratase large subunit">
    <location>
        <begin position="1"/>
        <end position="471"/>
    </location>
</feature>
<feature type="binding site" evidence="1">
    <location>
        <position position="347"/>
    </location>
    <ligand>
        <name>[4Fe-4S] cluster</name>
        <dbReference type="ChEBI" id="CHEBI:49883"/>
    </ligand>
</feature>
<feature type="binding site" evidence="1">
    <location>
        <position position="407"/>
    </location>
    <ligand>
        <name>[4Fe-4S] cluster</name>
        <dbReference type="ChEBI" id="CHEBI:49883"/>
    </ligand>
</feature>
<feature type="binding site" evidence="1">
    <location>
        <position position="410"/>
    </location>
    <ligand>
        <name>[4Fe-4S] cluster</name>
        <dbReference type="ChEBI" id="CHEBI:49883"/>
    </ligand>
</feature>
<keyword id="KW-0004">4Fe-4S</keyword>
<keyword id="KW-0028">Amino-acid biosynthesis</keyword>
<keyword id="KW-0100">Branched-chain amino acid biosynthesis</keyword>
<keyword id="KW-0408">Iron</keyword>
<keyword id="KW-0411">Iron-sulfur</keyword>
<keyword id="KW-0432">Leucine biosynthesis</keyword>
<keyword id="KW-0456">Lyase</keyword>
<keyword id="KW-0479">Metal-binding</keyword>
<keyword id="KW-1185">Reference proteome</keyword>
<proteinExistence type="inferred from homology"/>
<gene>
    <name evidence="1" type="primary">leuC</name>
    <name type="ordered locus">GbCGDNIH1_1680</name>
</gene>
<accession>Q0BRH4</accession>
<comment type="function">
    <text evidence="1">Catalyzes the isomerization between 2-isopropylmalate and 3-isopropylmalate, via the formation of 2-isopropylmaleate.</text>
</comment>
<comment type="catalytic activity">
    <reaction evidence="1">
        <text>(2R,3S)-3-isopropylmalate = (2S)-2-isopropylmalate</text>
        <dbReference type="Rhea" id="RHEA:32287"/>
        <dbReference type="ChEBI" id="CHEBI:1178"/>
        <dbReference type="ChEBI" id="CHEBI:35121"/>
        <dbReference type="EC" id="4.2.1.33"/>
    </reaction>
</comment>
<comment type="cofactor">
    <cofactor evidence="1">
        <name>[4Fe-4S] cluster</name>
        <dbReference type="ChEBI" id="CHEBI:49883"/>
    </cofactor>
    <text evidence="1">Binds 1 [4Fe-4S] cluster per subunit.</text>
</comment>
<comment type="pathway">
    <text evidence="1">Amino-acid biosynthesis; L-leucine biosynthesis; L-leucine from 3-methyl-2-oxobutanoate: step 2/4.</text>
</comment>
<comment type="subunit">
    <text evidence="1">Heterodimer of LeuC and LeuD.</text>
</comment>
<comment type="similarity">
    <text evidence="1">Belongs to the aconitase/IPM isomerase family. LeuC type 1 subfamily.</text>
</comment>
<evidence type="ECO:0000255" key="1">
    <source>
        <dbReference type="HAMAP-Rule" id="MF_01026"/>
    </source>
</evidence>
<dbReference type="EC" id="4.2.1.33" evidence="1"/>
<dbReference type="EMBL" id="CP000394">
    <property type="protein sequence ID" value="ABI62578.1"/>
    <property type="molecule type" value="Genomic_DNA"/>
</dbReference>
<dbReference type="RefSeq" id="WP_011632382.1">
    <property type="nucleotide sequence ID" value="NC_008343.2"/>
</dbReference>
<dbReference type="SMR" id="Q0BRH4"/>
<dbReference type="STRING" id="391165.GbCGDNIH1_1680"/>
<dbReference type="KEGG" id="gbe:GbCGDNIH1_1680"/>
<dbReference type="eggNOG" id="COG0065">
    <property type="taxonomic scope" value="Bacteria"/>
</dbReference>
<dbReference type="HOGENOM" id="CLU_006714_3_4_5"/>
<dbReference type="OrthoDB" id="9802769at2"/>
<dbReference type="UniPathway" id="UPA00048">
    <property type="reaction ID" value="UER00071"/>
</dbReference>
<dbReference type="Proteomes" id="UP000001963">
    <property type="component" value="Chromosome"/>
</dbReference>
<dbReference type="GO" id="GO:0003861">
    <property type="term" value="F:3-isopropylmalate dehydratase activity"/>
    <property type="evidence" value="ECO:0007669"/>
    <property type="project" value="UniProtKB-UniRule"/>
</dbReference>
<dbReference type="GO" id="GO:0051539">
    <property type="term" value="F:4 iron, 4 sulfur cluster binding"/>
    <property type="evidence" value="ECO:0007669"/>
    <property type="project" value="UniProtKB-KW"/>
</dbReference>
<dbReference type="GO" id="GO:0046872">
    <property type="term" value="F:metal ion binding"/>
    <property type="evidence" value="ECO:0007669"/>
    <property type="project" value="UniProtKB-KW"/>
</dbReference>
<dbReference type="GO" id="GO:0009098">
    <property type="term" value="P:L-leucine biosynthetic process"/>
    <property type="evidence" value="ECO:0007669"/>
    <property type="project" value="UniProtKB-UniRule"/>
</dbReference>
<dbReference type="CDD" id="cd01583">
    <property type="entry name" value="IPMI"/>
    <property type="match status" value="1"/>
</dbReference>
<dbReference type="FunFam" id="3.30.499.10:FF:000006">
    <property type="entry name" value="3-isopropylmalate dehydratase large subunit"/>
    <property type="match status" value="1"/>
</dbReference>
<dbReference type="FunFam" id="3.30.499.10:FF:000007">
    <property type="entry name" value="3-isopropylmalate dehydratase large subunit"/>
    <property type="match status" value="1"/>
</dbReference>
<dbReference type="Gene3D" id="3.30.499.10">
    <property type="entry name" value="Aconitase, domain 3"/>
    <property type="match status" value="2"/>
</dbReference>
<dbReference type="HAMAP" id="MF_01026">
    <property type="entry name" value="LeuC_type1"/>
    <property type="match status" value="1"/>
</dbReference>
<dbReference type="InterPro" id="IPR004430">
    <property type="entry name" value="3-IsopropMal_deHydase_lsu"/>
</dbReference>
<dbReference type="InterPro" id="IPR015931">
    <property type="entry name" value="Acnase/IPM_dHydase_lsu_aba_1/3"/>
</dbReference>
<dbReference type="InterPro" id="IPR001030">
    <property type="entry name" value="Acoase/IPM_deHydtase_lsu_aba"/>
</dbReference>
<dbReference type="InterPro" id="IPR018136">
    <property type="entry name" value="Aconitase_4Fe-4S_BS"/>
</dbReference>
<dbReference type="InterPro" id="IPR036008">
    <property type="entry name" value="Aconitase_4Fe-4S_dom"/>
</dbReference>
<dbReference type="InterPro" id="IPR050067">
    <property type="entry name" value="IPM_dehydratase_rel_enz"/>
</dbReference>
<dbReference type="InterPro" id="IPR033941">
    <property type="entry name" value="IPMI_cat"/>
</dbReference>
<dbReference type="NCBIfam" id="TIGR00170">
    <property type="entry name" value="leuC"/>
    <property type="match status" value="1"/>
</dbReference>
<dbReference type="NCBIfam" id="NF004016">
    <property type="entry name" value="PRK05478.1"/>
    <property type="match status" value="1"/>
</dbReference>
<dbReference type="NCBIfam" id="NF009116">
    <property type="entry name" value="PRK12466.1"/>
    <property type="match status" value="1"/>
</dbReference>
<dbReference type="PANTHER" id="PTHR43822:SF9">
    <property type="entry name" value="3-ISOPROPYLMALATE DEHYDRATASE"/>
    <property type="match status" value="1"/>
</dbReference>
<dbReference type="PANTHER" id="PTHR43822">
    <property type="entry name" value="HOMOACONITASE, MITOCHONDRIAL-RELATED"/>
    <property type="match status" value="1"/>
</dbReference>
<dbReference type="Pfam" id="PF00330">
    <property type="entry name" value="Aconitase"/>
    <property type="match status" value="1"/>
</dbReference>
<dbReference type="PRINTS" id="PR00415">
    <property type="entry name" value="ACONITASE"/>
</dbReference>
<dbReference type="SUPFAM" id="SSF53732">
    <property type="entry name" value="Aconitase iron-sulfur domain"/>
    <property type="match status" value="1"/>
</dbReference>
<dbReference type="PROSITE" id="PS00450">
    <property type="entry name" value="ACONITASE_1"/>
    <property type="match status" value="1"/>
</dbReference>
<dbReference type="PROSITE" id="PS01244">
    <property type="entry name" value="ACONITASE_2"/>
    <property type="match status" value="1"/>
</dbReference>
<reference key="1">
    <citation type="journal article" date="2007" name="J. Bacteriol.">
        <title>Genome sequence analysis of the emerging human pathogenic acetic acid bacterium Granulibacter bethesdensis.</title>
        <authorList>
            <person name="Greenberg D.E."/>
            <person name="Porcella S.F."/>
            <person name="Zelazny A.M."/>
            <person name="Virtaneva K."/>
            <person name="Sturdevant D.E."/>
            <person name="Kupko J.J. III"/>
            <person name="Barbian K.D."/>
            <person name="Babar A."/>
            <person name="Dorward D.W."/>
            <person name="Holland S.M."/>
        </authorList>
    </citation>
    <scope>NUCLEOTIDE SEQUENCE [LARGE SCALE GENOMIC DNA]</scope>
    <source>
        <strain>ATCC BAA-1260 / CGDNIH1</strain>
    </source>
</reference>
<organism>
    <name type="scientific">Granulibacter bethesdensis (strain ATCC BAA-1260 / CGDNIH1)</name>
    <dbReference type="NCBI Taxonomy" id="391165"/>
    <lineage>
        <taxon>Bacteria</taxon>
        <taxon>Pseudomonadati</taxon>
        <taxon>Pseudomonadota</taxon>
        <taxon>Alphaproteobacteria</taxon>
        <taxon>Acetobacterales</taxon>
        <taxon>Acetobacteraceae</taxon>
        <taxon>Granulibacter</taxon>
    </lineage>
</organism>
<name>LEUC_GRABC</name>